<proteinExistence type="inferred from homology"/>
<name>ILVD_NITMU</name>
<evidence type="ECO:0000255" key="1">
    <source>
        <dbReference type="HAMAP-Rule" id="MF_00012"/>
    </source>
</evidence>
<feature type="chain" id="PRO_1000001019" description="Dihydroxy-acid dehydratase">
    <location>
        <begin position="1"/>
        <end position="557"/>
    </location>
</feature>
<feature type="active site" description="Proton acceptor" evidence="1">
    <location>
        <position position="473"/>
    </location>
</feature>
<feature type="binding site" evidence="1">
    <location>
        <position position="50"/>
    </location>
    <ligand>
        <name>[2Fe-2S] cluster</name>
        <dbReference type="ChEBI" id="CHEBI:190135"/>
    </ligand>
</feature>
<feature type="binding site" evidence="1">
    <location>
        <position position="82"/>
    </location>
    <ligand>
        <name>Mg(2+)</name>
        <dbReference type="ChEBI" id="CHEBI:18420"/>
    </ligand>
</feature>
<feature type="binding site" evidence="1">
    <location>
        <position position="123"/>
    </location>
    <ligand>
        <name>[2Fe-2S] cluster</name>
        <dbReference type="ChEBI" id="CHEBI:190135"/>
    </ligand>
</feature>
<feature type="binding site" evidence="1">
    <location>
        <position position="124"/>
    </location>
    <ligand>
        <name>Mg(2+)</name>
        <dbReference type="ChEBI" id="CHEBI:18420"/>
    </ligand>
</feature>
<feature type="binding site" description="via carbamate group" evidence="1">
    <location>
        <position position="125"/>
    </location>
    <ligand>
        <name>Mg(2+)</name>
        <dbReference type="ChEBI" id="CHEBI:18420"/>
    </ligand>
</feature>
<feature type="binding site" evidence="1">
    <location>
        <position position="195"/>
    </location>
    <ligand>
        <name>[2Fe-2S] cluster</name>
        <dbReference type="ChEBI" id="CHEBI:190135"/>
    </ligand>
</feature>
<feature type="binding site" evidence="1">
    <location>
        <position position="447"/>
    </location>
    <ligand>
        <name>Mg(2+)</name>
        <dbReference type="ChEBI" id="CHEBI:18420"/>
    </ligand>
</feature>
<feature type="modified residue" description="N6-carboxylysine" evidence="1">
    <location>
        <position position="125"/>
    </location>
</feature>
<accession>Q2YC67</accession>
<sequence>MSDNQRSRAITQGAERTPNRAMLRAVGFSDNDFDKPIVGVANGFSTITPCNKGLNELALAAEQALKQAAAMPQMFGTITVSDGISMGTEGMKYSLVSREVIADSIETAVQAESMDGVIAIGGCDKNMPGAMIAIARMNVPAIFVYGGTIKPGHYKGKDLTIVSAFEAVGQYTSHKIDAKELLEVERHACPGAGSCGGMFTANTMSSAFEAMGMSLPYSSTMAAEDGEKLTSAARSAEVLVDAIRKQIRPRDIITRKSIENAIAVIMAVGGSTNAVLHFLAIAHAAEVTLTIDDFERMRGKVPVLCDLKPSGRYVATDLHKAGGIPQVMKMLLDHGLLHGDCITISGQTIAEILKDVPSEPREDQDVIRQWDNPLYVQGHLAILKGNLAPEGCVAKITGVKSPKITGPARVFDSEEACMAAILAREIQPGDVVVIRYEGPKGGPGMREMLSPTSALIGEGLGDSVGLITDGRFSGGTYGMVVGHVAPEAFVGGTIALVREGDSITIDAEQRLLQLNIPGDELARRRAEWQPPHPRYTRGVLAKYSKLVSSASRGAITD</sequence>
<reference key="1">
    <citation type="submission" date="2005-08" db="EMBL/GenBank/DDBJ databases">
        <title>Complete sequence of chromosome 1 of Nitrosospira multiformis ATCC 25196.</title>
        <authorList>
            <person name="Copeland A."/>
            <person name="Lucas S."/>
            <person name="Lapidus A."/>
            <person name="Barry K."/>
            <person name="Detter J.C."/>
            <person name="Glavina T."/>
            <person name="Hammon N."/>
            <person name="Israni S."/>
            <person name="Pitluck S."/>
            <person name="Chain P."/>
            <person name="Malfatti S."/>
            <person name="Shin M."/>
            <person name="Vergez L."/>
            <person name="Schmutz J."/>
            <person name="Larimer F."/>
            <person name="Land M."/>
            <person name="Hauser L."/>
            <person name="Kyrpides N."/>
            <person name="Lykidis A."/>
            <person name="Richardson P."/>
        </authorList>
    </citation>
    <scope>NUCLEOTIDE SEQUENCE [LARGE SCALE GENOMIC DNA]</scope>
    <source>
        <strain>ATCC 25196 / NCIMB 11849 / C 71</strain>
    </source>
</reference>
<organism>
    <name type="scientific">Nitrosospira multiformis (strain ATCC 25196 / NCIMB 11849 / C 71)</name>
    <dbReference type="NCBI Taxonomy" id="323848"/>
    <lineage>
        <taxon>Bacteria</taxon>
        <taxon>Pseudomonadati</taxon>
        <taxon>Pseudomonadota</taxon>
        <taxon>Betaproteobacteria</taxon>
        <taxon>Nitrosomonadales</taxon>
        <taxon>Nitrosomonadaceae</taxon>
        <taxon>Nitrosospira</taxon>
    </lineage>
</organism>
<keyword id="KW-0001">2Fe-2S</keyword>
<keyword id="KW-0028">Amino-acid biosynthesis</keyword>
<keyword id="KW-0100">Branched-chain amino acid biosynthesis</keyword>
<keyword id="KW-0408">Iron</keyword>
<keyword id="KW-0411">Iron-sulfur</keyword>
<keyword id="KW-0456">Lyase</keyword>
<keyword id="KW-0460">Magnesium</keyword>
<keyword id="KW-0479">Metal-binding</keyword>
<keyword id="KW-1185">Reference proteome</keyword>
<comment type="function">
    <text evidence="1">Functions in the biosynthesis of branched-chain amino acids. Catalyzes the dehydration of (2R,3R)-2,3-dihydroxy-3-methylpentanoate (2,3-dihydroxy-3-methylvalerate) into 2-oxo-3-methylpentanoate (2-oxo-3-methylvalerate) and of (2R)-2,3-dihydroxy-3-methylbutanoate (2,3-dihydroxyisovalerate) into 2-oxo-3-methylbutanoate (2-oxoisovalerate), the penultimate precursor to L-isoleucine and L-valine, respectively.</text>
</comment>
<comment type="catalytic activity">
    <reaction evidence="1">
        <text>(2R)-2,3-dihydroxy-3-methylbutanoate = 3-methyl-2-oxobutanoate + H2O</text>
        <dbReference type="Rhea" id="RHEA:24809"/>
        <dbReference type="ChEBI" id="CHEBI:11851"/>
        <dbReference type="ChEBI" id="CHEBI:15377"/>
        <dbReference type="ChEBI" id="CHEBI:49072"/>
        <dbReference type="EC" id="4.2.1.9"/>
    </reaction>
    <physiologicalReaction direction="left-to-right" evidence="1">
        <dbReference type="Rhea" id="RHEA:24810"/>
    </physiologicalReaction>
</comment>
<comment type="catalytic activity">
    <reaction evidence="1">
        <text>(2R,3R)-2,3-dihydroxy-3-methylpentanoate = (S)-3-methyl-2-oxopentanoate + H2O</text>
        <dbReference type="Rhea" id="RHEA:27694"/>
        <dbReference type="ChEBI" id="CHEBI:15377"/>
        <dbReference type="ChEBI" id="CHEBI:35146"/>
        <dbReference type="ChEBI" id="CHEBI:49258"/>
        <dbReference type="EC" id="4.2.1.9"/>
    </reaction>
    <physiologicalReaction direction="left-to-right" evidence="1">
        <dbReference type="Rhea" id="RHEA:27695"/>
    </physiologicalReaction>
</comment>
<comment type="cofactor">
    <cofactor evidence="1">
        <name>[2Fe-2S] cluster</name>
        <dbReference type="ChEBI" id="CHEBI:190135"/>
    </cofactor>
    <text evidence="1">Binds 1 [2Fe-2S] cluster per subunit. This cluster acts as a Lewis acid cofactor.</text>
</comment>
<comment type="cofactor">
    <cofactor evidence="1">
        <name>Mg(2+)</name>
        <dbReference type="ChEBI" id="CHEBI:18420"/>
    </cofactor>
</comment>
<comment type="pathway">
    <text evidence="1">Amino-acid biosynthesis; L-isoleucine biosynthesis; L-isoleucine from 2-oxobutanoate: step 3/4.</text>
</comment>
<comment type="pathway">
    <text evidence="1">Amino-acid biosynthesis; L-valine biosynthesis; L-valine from pyruvate: step 3/4.</text>
</comment>
<comment type="subunit">
    <text evidence="1">Homodimer.</text>
</comment>
<comment type="similarity">
    <text evidence="1">Belongs to the IlvD/Edd family.</text>
</comment>
<gene>
    <name evidence="1" type="primary">ilvD</name>
    <name type="ordered locus">Nmul_A0346</name>
</gene>
<dbReference type="EC" id="4.2.1.9" evidence="1"/>
<dbReference type="EMBL" id="CP000103">
    <property type="protein sequence ID" value="ABB73654.1"/>
    <property type="molecule type" value="Genomic_DNA"/>
</dbReference>
<dbReference type="RefSeq" id="WP_011379708.1">
    <property type="nucleotide sequence ID" value="NC_007614.1"/>
</dbReference>
<dbReference type="SMR" id="Q2YC67"/>
<dbReference type="STRING" id="323848.Nmul_A0346"/>
<dbReference type="KEGG" id="nmu:Nmul_A0346"/>
<dbReference type="eggNOG" id="COG0129">
    <property type="taxonomic scope" value="Bacteria"/>
</dbReference>
<dbReference type="HOGENOM" id="CLU_014271_4_1_4"/>
<dbReference type="OrthoDB" id="9807077at2"/>
<dbReference type="UniPathway" id="UPA00047">
    <property type="reaction ID" value="UER00057"/>
</dbReference>
<dbReference type="UniPathway" id="UPA00049">
    <property type="reaction ID" value="UER00061"/>
</dbReference>
<dbReference type="Proteomes" id="UP000002718">
    <property type="component" value="Chromosome"/>
</dbReference>
<dbReference type="GO" id="GO:0051537">
    <property type="term" value="F:2 iron, 2 sulfur cluster binding"/>
    <property type="evidence" value="ECO:0007669"/>
    <property type="project" value="UniProtKB-UniRule"/>
</dbReference>
<dbReference type="GO" id="GO:0004160">
    <property type="term" value="F:dihydroxy-acid dehydratase activity"/>
    <property type="evidence" value="ECO:0007669"/>
    <property type="project" value="UniProtKB-UniRule"/>
</dbReference>
<dbReference type="GO" id="GO:0000287">
    <property type="term" value="F:magnesium ion binding"/>
    <property type="evidence" value="ECO:0007669"/>
    <property type="project" value="UniProtKB-UniRule"/>
</dbReference>
<dbReference type="GO" id="GO:0009097">
    <property type="term" value="P:isoleucine biosynthetic process"/>
    <property type="evidence" value="ECO:0007669"/>
    <property type="project" value="UniProtKB-UniRule"/>
</dbReference>
<dbReference type="GO" id="GO:0009099">
    <property type="term" value="P:L-valine biosynthetic process"/>
    <property type="evidence" value="ECO:0007669"/>
    <property type="project" value="UniProtKB-UniRule"/>
</dbReference>
<dbReference type="FunFam" id="3.50.30.80:FF:000001">
    <property type="entry name" value="Dihydroxy-acid dehydratase"/>
    <property type="match status" value="1"/>
</dbReference>
<dbReference type="Gene3D" id="3.50.30.80">
    <property type="entry name" value="IlvD/EDD C-terminal domain-like"/>
    <property type="match status" value="1"/>
</dbReference>
<dbReference type="HAMAP" id="MF_00012">
    <property type="entry name" value="IlvD"/>
    <property type="match status" value="1"/>
</dbReference>
<dbReference type="InterPro" id="IPR050165">
    <property type="entry name" value="DHAD_IlvD/Edd"/>
</dbReference>
<dbReference type="InterPro" id="IPR042096">
    <property type="entry name" value="Dihydro-acid_dehy_C"/>
</dbReference>
<dbReference type="InterPro" id="IPR004404">
    <property type="entry name" value="DihydroxyA_deHydtase"/>
</dbReference>
<dbReference type="InterPro" id="IPR020558">
    <property type="entry name" value="DiOHA_6PGluconate_deHydtase_CS"/>
</dbReference>
<dbReference type="InterPro" id="IPR056740">
    <property type="entry name" value="ILV_EDD_C"/>
</dbReference>
<dbReference type="InterPro" id="IPR000581">
    <property type="entry name" value="ILV_EDD_N"/>
</dbReference>
<dbReference type="InterPro" id="IPR037237">
    <property type="entry name" value="IlvD/EDD_N"/>
</dbReference>
<dbReference type="NCBIfam" id="TIGR00110">
    <property type="entry name" value="ilvD"/>
    <property type="match status" value="1"/>
</dbReference>
<dbReference type="NCBIfam" id="NF002068">
    <property type="entry name" value="PRK00911.1"/>
    <property type="match status" value="1"/>
</dbReference>
<dbReference type="PANTHER" id="PTHR21000">
    <property type="entry name" value="DIHYDROXY-ACID DEHYDRATASE DAD"/>
    <property type="match status" value="1"/>
</dbReference>
<dbReference type="PANTHER" id="PTHR21000:SF5">
    <property type="entry name" value="DIHYDROXY-ACID DEHYDRATASE, MITOCHONDRIAL"/>
    <property type="match status" value="1"/>
</dbReference>
<dbReference type="Pfam" id="PF24877">
    <property type="entry name" value="ILV_EDD_C"/>
    <property type="match status" value="1"/>
</dbReference>
<dbReference type="Pfam" id="PF00920">
    <property type="entry name" value="ILVD_EDD_N"/>
    <property type="match status" value="1"/>
</dbReference>
<dbReference type="SUPFAM" id="SSF143975">
    <property type="entry name" value="IlvD/EDD N-terminal domain-like"/>
    <property type="match status" value="1"/>
</dbReference>
<dbReference type="SUPFAM" id="SSF52016">
    <property type="entry name" value="LeuD/IlvD-like"/>
    <property type="match status" value="1"/>
</dbReference>
<dbReference type="PROSITE" id="PS00886">
    <property type="entry name" value="ILVD_EDD_1"/>
    <property type="match status" value="1"/>
</dbReference>
<dbReference type="PROSITE" id="PS00887">
    <property type="entry name" value="ILVD_EDD_2"/>
    <property type="match status" value="1"/>
</dbReference>
<protein>
    <recommendedName>
        <fullName evidence="1">Dihydroxy-acid dehydratase</fullName>
        <shortName evidence="1">DAD</shortName>
        <ecNumber evidence="1">4.2.1.9</ecNumber>
    </recommendedName>
</protein>